<sequence length="534" mass="60603">MFSWVSKDARRKKEPELFQTVAEGLRQLYAQKLLPLEEHYRFHEFHSPALEDADFDNKPMVLLVGQYSTGKTTFIRHLIEQDFPGMRIGPEPTTDSFIAVMHGPTEGVVPGNALVVDPRRPFRKLNAFGNAFLNRFMCAQLPNPVLDSISIIDTPGILSGEKQRISRGYDFAAVLEWFAERVDRIILLFDAHKLDISDEFSEVIKALKNHEDKIRVVLNKADQIETQQLMRVYGALMWSLGKIINTPEVVRVYIGSFWSHPLLIPDNRKLFEAEEQDLFKDIQSLPRNAALRKLNDLIKRARLAKVHAYIISSLKKEMPNVFGKESKKKELVNNLGEIYQKIEREHQISSGDFPSLRKMQELLQTQDFSKFQALKPKLLDTVDDMLANDIARLMVMVRQEESLMPSQAVKGGAFDGTMNGPFGHGYGEGAGEGIDDVEWVVGKDKPTYDEIFYTLSPVNGKITGANAKKEMVKSKLPNTVLGKIWKLADVDKDGLLDDEEFALANHLIKVKLEGHELPADLPPHLIPPSKRRHE</sequence>
<comment type="function">
    <text evidence="1 3 9 10 11 13">ATP- and membrane-binding protein that controls membrane reorganization/tubulation upon ATP hydrolysis. In vitro causes vesiculation of endocytic membranes (By similarity). Acts in early endocytic membrane fusion and membrane trafficking of recycling endosomes (PubMed:15930129, PubMed:20159556). Recruited to endosomal membranes upon nerve growth factor stimulation, indirectly regulates neurite outgrowth (By similarity). Plays a role in myoblast fusion (PubMed:21177873). Involved in the unidirectional retrograde dendritic transport of endocytosed BACE1 and in efficient sorting of BACE1 to axons implicating a function in neuronal APP processing (PubMed:24373286). Plays a role in the formation of the ciliary vesicle (CV), an early step in cilium biogenesis. Proposed to be required for the fusion of distal appendage vesicles (DAVs) to form the CV by recruiting SNARE complex component SNAP29. Is required for recruitment of transition zone proteins CEP290, RPGRIP1L, TMEM67 and B9D2, and of IFT20 following DAV reorganization before Rab8-dependent ciliary membrane extension. Required for the loss of CCP110 form the mother centriole essential for the maturation of the basal body during ciliogenesis (By similarity).</text>
</comment>
<comment type="subunit">
    <text evidence="3 9 11 12">Homooligomer, and heterooligomer with EHD2, EHD3 and EHD4, ATP-binding is required for heterooligomerization (By similarity). Interacts (via EH domain) with MICALL1 (via NPF1 motif); the interaction is direct and recruits EHD1 to membranes (PubMed:23572513). Interacts with RAB35; the interaction is indirect through MICALL1 and recruits EHD1 to membranes (PubMed:23572513). Interacts (via EH domain) with PACSIN2 (via NPF motifs); regulates localization to tubular recycling endosome membranes (PubMed:15930129). Interacts with PACSIN1 (PubMed:15930129). Interacts with RAB8A (By similarity). Interacts with FER1L5 (via second C2 domain) (PubMed:21177873). Interacts with MYOF (PubMed:21177873). Interacts with ZFYVE20 (By similarity). Interacts (via EH domain) with RAB11FIP2 (By similarity).</text>
</comment>
<comment type="subcellular location">
    <subcellularLocation>
        <location evidence="3">Recycling endosome membrane</location>
        <topology evidence="14">Peripheral membrane protein</topology>
        <orientation evidence="14">Cytoplasmic side</orientation>
    </subcellularLocation>
    <subcellularLocation>
        <location evidence="3">Early endosome membrane</location>
        <topology evidence="14">Peripheral membrane protein</topology>
        <orientation evidence="14">Cytoplasmic side</orientation>
    </subcellularLocation>
    <subcellularLocation>
        <location evidence="11">Cell membrane</location>
        <topology evidence="14">Peripheral membrane protein</topology>
        <orientation evidence="14">Cytoplasmic side</orientation>
    </subcellularLocation>
    <subcellularLocation>
        <location evidence="13">Cytoplasmic vesicle</location>
    </subcellularLocation>
    <subcellularLocation>
        <location evidence="3">Cell projection</location>
        <location evidence="3">Cilium membrane</location>
        <topology evidence="14">Peripheral membrane protein</topology>
        <orientation evidence="14">Cytoplasmic side</orientation>
    </subcellularLocation>
    <text evidence="3 11 13">Preferentially associates with tubular recycling endosomes (By similarity). Colocalizes with FER1L5 at plasma membrane in myoblasts and myotubes (PubMed:21177873). Localizes to the ciliary pocket from where the cilium protrudes (By similarity). Colocalizes with BACE1 in tubulovesicular cytoplasmic membranes. Colocalizes with BACE1 and APP amyloid beta proteins in hippocampal mossy fiber terminals.</text>
</comment>
<comment type="tissue specificity">
    <text evidence="8">Highly expressed in testis. Also expressed in kidney, heart, intestine, and brain.</text>
</comment>
<comment type="developmental stage">
    <text evidence="8">Expression is already noted at day 9.5 in the limb buds and pharyngeal arches and at day 10.5 in sclerotomes, at various elements of the branchial apparatus (mandible and hyoid), and in the occipital region. At day 15.5 expression peaks in cartilage, preceding hypertrophy and ossification, and at day 17.5 there is no expression in the bones.</text>
</comment>
<comment type="domain">
    <text evidence="9">The EH domain interacts with Asn-Pro-Phe (NPF) motifs of target proteins.</text>
</comment>
<comment type="similarity">
    <text evidence="7">Belongs to the TRAFAC class dynamin-like GTPase superfamily. Dynamin/Fzo/YdjA family. EHD subfamily.</text>
</comment>
<feature type="chain" id="PRO_0000146110" description="EH domain-containing protein 1">
    <location>
        <begin position="1"/>
        <end position="534"/>
    </location>
</feature>
<feature type="domain" description="Dynamin-type G" evidence="7">
    <location>
        <begin position="55"/>
        <end position="286"/>
    </location>
</feature>
<feature type="domain" description="EH" evidence="5">
    <location>
        <begin position="444"/>
        <end position="532"/>
    </location>
</feature>
<feature type="domain" description="EF-hand" evidence="6">
    <location>
        <begin position="476"/>
        <end position="511"/>
    </location>
</feature>
<feature type="region of interest" description="G1 motif" evidence="7">
    <location>
        <begin position="65"/>
        <end position="72"/>
    </location>
</feature>
<feature type="region of interest" description="G2 motif" evidence="7">
    <location>
        <begin position="91"/>
        <end position="92"/>
    </location>
</feature>
<feature type="region of interest" description="G3 motif" evidence="7">
    <location>
        <begin position="153"/>
        <end position="156"/>
    </location>
</feature>
<feature type="region of interest" description="G4 motif" evidence="7">
    <location>
        <begin position="219"/>
        <end position="222"/>
    </location>
</feature>
<feature type="region of interest" description="G5 motif" evidence="7">
    <location>
        <position position="243"/>
    </location>
</feature>
<feature type="coiled-coil region" evidence="4">
    <location>
        <begin position="198"/>
        <end position="227"/>
    </location>
</feature>
<feature type="binding site" evidence="3">
    <location>
        <begin position="65"/>
        <end position="72"/>
    </location>
    <ligand>
        <name>ATP</name>
        <dbReference type="ChEBI" id="CHEBI:30616"/>
    </ligand>
</feature>
<feature type="binding site" evidence="2">
    <location>
        <position position="220"/>
    </location>
    <ligand>
        <name>ATP</name>
        <dbReference type="ChEBI" id="CHEBI:30616"/>
    </ligand>
</feature>
<feature type="binding site" evidence="2">
    <location>
        <position position="258"/>
    </location>
    <ligand>
        <name>ATP</name>
        <dbReference type="ChEBI" id="CHEBI:30616"/>
    </ligand>
</feature>
<feature type="binding site" evidence="6">
    <location>
        <position position="489"/>
    </location>
    <ligand>
        <name>Ca(2+)</name>
        <dbReference type="ChEBI" id="CHEBI:29108"/>
    </ligand>
</feature>
<feature type="binding site" evidence="6">
    <location>
        <position position="491"/>
    </location>
    <ligand>
        <name>Ca(2+)</name>
        <dbReference type="ChEBI" id="CHEBI:29108"/>
    </ligand>
</feature>
<feature type="binding site" evidence="6">
    <location>
        <position position="493"/>
    </location>
    <ligand>
        <name>Ca(2+)</name>
        <dbReference type="ChEBI" id="CHEBI:29108"/>
    </ligand>
</feature>
<feature type="binding site" evidence="6">
    <location>
        <position position="500"/>
    </location>
    <ligand>
        <name>Ca(2+)</name>
        <dbReference type="ChEBI" id="CHEBI:29108"/>
    </ligand>
</feature>
<feature type="modified residue" description="N-acetylmethionine" evidence="3">
    <location>
        <position position="1"/>
    </location>
</feature>
<feature type="modified residue" description="Phosphoserine" evidence="17">
    <location>
        <position position="355"/>
    </location>
</feature>
<feature type="modified residue" description="Phosphoserine" evidence="17">
    <location>
        <position position="456"/>
    </location>
</feature>
<feature type="mutagenesis site" description="Abolishes interaction with PACSIN2." evidence="9">
    <original>G</original>
    <variation>R</variation>
    <location>
        <position position="65"/>
    </location>
</feature>
<feature type="mutagenesis site" description="Abolishes interaction with PACSIN2." evidence="9">
    <original>W</original>
    <variation>A</variation>
    <location>
        <position position="485"/>
    </location>
</feature>
<organism>
    <name type="scientific">Mus musculus</name>
    <name type="common">Mouse</name>
    <dbReference type="NCBI Taxonomy" id="10090"/>
    <lineage>
        <taxon>Eukaryota</taxon>
        <taxon>Metazoa</taxon>
        <taxon>Chordata</taxon>
        <taxon>Craniata</taxon>
        <taxon>Vertebrata</taxon>
        <taxon>Euteleostomi</taxon>
        <taxon>Mammalia</taxon>
        <taxon>Eutheria</taxon>
        <taxon>Euarchontoglires</taxon>
        <taxon>Glires</taxon>
        <taxon>Rodentia</taxon>
        <taxon>Myomorpha</taxon>
        <taxon>Muroidea</taxon>
        <taxon>Muridae</taxon>
        <taxon>Murinae</taxon>
        <taxon>Mus</taxon>
        <taxon>Mus</taxon>
    </lineage>
</organism>
<keyword id="KW-0007">Acetylation</keyword>
<keyword id="KW-0067">ATP-binding</keyword>
<keyword id="KW-0106">Calcium</keyword>
<keyword id="KW-1003">Cell membrane</keyword>
<keyword id="KW-0966">Cell projection</keyword>
<keyword id="KW-0969">Cilium</keyword>
<keyword id="KW-0970">Cilium biogenesis/degradation</keyword>
<keyword id="KW-0175">Coiled coil</keyword>
<keyword id="KW-0968">Cytoplasmic vesicle</keyword>
<keyword id="KW-0967">Endosome</keyword>
<keyword id="KW-0472">Membrane</keyword>
<keyword id="KW-0479">Metal-binding</keyword>
<keyword id="KW-0547">Nucleotide-binding</keyword>
<keyword id="KW-0597">Phosphoprotein</keyword>
<keyword id="KW-0653">Protein transport</keyword>
<keyword id="KW-1185">Reference proteome</keyword>
<keyword id="KW-0813">Transport</keyword>
<accession>Q9WVK4</accession>
<reference key="1">
    <citation type="journal article" date="1999" name="Genomics">
        <title>EHD1 -- an EH-domain-containing protein with a specific expression pattern.</title>
        <authorList>
            <person name="Mintz L."/>
            <person name="Galperin E."/>
            <person name="Pasmanik-Chor M."/>
            <person name="Tulzinsky S."/>
            <person name="Bromberg Y."/>
            <person name="Kozak C.A."/>
            <person name="Joyner A."/>
            <person name="Fein A."/>
            <person name="Horowitz M."/>
        </authorList>
    </citation>
    <scope>NUCLEOTIDE SEQUENCE [MRNA]</scope>
    <scope>TISSUE SPECIFICITY</scope>
    <scope>DEVELOPMENTAL STAGE</scope>
    <source>
        <strain>ICR</strain>
    </source>
</reference>
<reference key="2">
    <citation type="submission" date="1999-07" db="EMBL/GenBank/DDBJ databases">
        <authorList>
            <person name="Plomann M."/>
            <person name="Behrendt D."/>
            <person name="Ritter B."/>
            <person name="Modregger J."/>
            <person name="Halback A."/>
            <person name="Paulsson M."/>
        </authorList>
    </citation>
    <scope>NUCLEOTIDE SEQUENCE [MRNA]</scope>
    <source>
        <strain>C57BL/6J</strain>
    </source>
</reference>
<reference key="3">
    <citation type="journal article" date="2005" name="Science">
        <title>The transcriptional landscape of the mammalian genome.</title>
        <authorList>
            <person name="Carninci P."/>
            <person name="Kasukawa T."/>
            <person name="Katayama S."/>
            <person name="Gough J."/>
            <person name="Frith M.C."/>
            <person name="Maeda N."/>
            <person name="Oyama R."/>
            <person name="Ravasi T."/>
            <person name="Lenhard B."/>
            <person name="Wells C."/>
            <person name="Kodzius R."/>
            <person name="Shimokawa K."/>
            <person name="Bajic V.B."/>
            <person name="Brenner S.E."/>
            <person name="Batalov S."/>
            <person name="Forrest A.R."/>
            <person name="Zavolan M."/>
            <person name="Davis M.J."/>
            <person name="Wilming L.G."/>
            <person name="Aidinis V."/>
            <person name="Allen J.E."/>
            <person name="Ambesi-Impiombato A."/>
            <person name="Apweiler R."/>
            <person name="Aturaliya R.N."/>
            <person name="Bailey T.L."/>
            <person name="Bansal M."/>
            <person name="Baxter L."/>
            <person name="Beisel K.W."/>
            <person name="Bersano T."/>
            <person name="Bono H."/>
            <person name="Chalk A.M."/>
            <person name="Chiu K.P."/>
            <person name="Choudhary V."/>
            <person name="Christoffels A."/>
            <person name="Clutterbuck D.R."/>
            <person name="Crowe M.L."/>
            <person name="Dalla E."/>
            <person name="Dalrymple B.P."/>
            <person name="de Bono B."/>
            <person name="Della Gatta G."/>
            <person name="di Bernardo D."/>
            <person name="Down T."/>
            <person name="Engstrom P."/>
            <person name="Fagiolini M."/>
            <person name="Faulkner G."/>
            <person name="Fletcher C.F."/>
            <person name="Fukushima T."/>
            <person name="Furuno M."/>
            <person name="Futaki S."/>
            <person name="Gariboldi M."/>
            <person name="Georgii-Hemming P."/>
            <person name="Gingeras T.R."/>
            <person name="Gojobori T."/>
            <person name="Green R.E."/>
            <person name="Gustincich S."/>
            <person name="Harbers M."/>
            <person name="Hayashi Y."/>
            <person name="Hensch T.K."/>
            <person name="Hirokawa N."/>
            <person name="Hill D."/>
            <person name="Huminiecki L."/>
            <person name="Iacono M."/>
            <person name="Ikeo K."/>
            <person name="Iwama A."/>
            <person name="Ishikawa T."/>
            <person name="Jakt M."/>
            <person name="Kanapin A."/>
            <person name="Katoh M."/>
            <person name="Kawasawa Y."/>
            <person name="Kelso J."/>
            <person name="Kitamura H."/>
            <person name="Kitano H."/>
            <person name="Kollias G."/>
            <person name="Krishnan S.P."/>
            <person name="Kruger A."/>
            <person name="Kummerfeld S.K."/>
            <person name="Kurochkin I.V."/>
            <person name="Lareau L.F."/>
            <person name="Lazarevic D."/>
            <person name="Lipovich L."/>
            <person name="Liu J."/>
            <person name="Liuni S."/>
            <person name="McWilliam S."/>
            <person name="Madan Babu M."/>
            <person name="Madera M."/>
            <person name="Marchionni L."/>
            <person name="Matsuda H."/>
            <person name="Matsuzawa S."/>
            <person name="Miki H."/>
            <person name="Mignone F."/>
            <person name="Miyake S."/>
            <person name="Morris K."/>
            <person name="Mottagui-Tabar S."/>
            <person name="Mulder N."/>
            <person name="Nakano N."/>
            <person name="Nakauchi H."/>
            <person name="Ng P."/>
            <person name="Nilsson R."/>
            <person name="Nishiguchi S."/>
            <person name="Nishikawa S."/>
            <person name="Nori F."/>
            <person name="Ohara O."/>
            <person name="Okazaki Y."/>
            <person name="Orlando V."/>
            <person name="Pang K.C."/>
            <person name="Pavan W.J."/>
            <person name="Pavesi G."/>
            <person name="Pesole G."/>
            <person name="Petrovsky N."/>
            <person name="Piazza S."/>
            <person name="Reed J."/>
            <person name="Reid J.F."/>
            <person name="Ring B.Z."/>
            <person name="Ringwald M."/>
            <person name="Rost B."/>
            <person name="Ruan Y."/>
            <person name="Salzberg S.L."/>
            <person name="Sandelin A."/>
            <person name="Schneider C."/>
            <person name="Schoenbach C."/>
            <person name="Sekiguchi K."/>
            <person name="Semple C.A."/>
            <person name="Seno S."/>
            <person name="Sessa L."/>
            <person name="Sheng Y."/>
            <person name="Shibata Y."/>
            <person name="Shimada H."/>
            <person name="Shimada K."/>
            <person name="Silva D."/>
            <person name="Sinclair B."/>
            <person name="Sperling S."/>
            <person name="Stupka E."/>
            <person name="Sugiura K."/>
            <person name="Sultana R."/>
            <person name="Takenaka Y."/>
            <person name="Taki K."/>
            <person name="Tammoja K."/>
            <person name="Tan S.L."/>
            <person name="Tang S."/>
            <person name="Taylor M.S."/>
            <person name="Tegner J."/>
            <person name="Teichmann S.A."/>
            <person name="Ueda H.R."/>
            <person name="van Nimwegen E."/>
            <person name="Verardo R."/>
            <person name="Wei C.L."/>
            <person name="Yagi K."/>
            <person name="Yamanishi H."/>
            <person name="Zabarovsky E."/>
            <person name="Zhu S."/>
            <person name="Zimmer A."/>
            <person name="Hide W."/>
            <person name="Bult C."/>
            <person name="Grimmond S.M."/>
            <person name="Teasdale R.D."/>
            <person name="Liu E.T."/>
            <person name="Brusic V."/>
            <person name="Quackenbush J."/>
            <person name="Wahlestedt C."/>
            <person name="Mattick J.S."/>
            <person name="Hume D.A."/>
            <person name="Kai C."/>
            <person name="Sasaki D."/>
            <person name="Tomaru Y."/>
            <person name="Fukuda S."/>
            <person name="Kanamori-Katayama M."/>
            <person name="Suzuki M."/>
            <person name="Aoki J."/>
            <person name="Arakawa T."/>
            <person name="Iida J."/>
            <person name="Imamura K."/>
            <person name="Itoh M."/>
            <person name="Kato T."/>
            <person name="Kawaji H."/>
            <person name="Kawagashira N."/>
            <person name="Kawashima T."/>
            <person name="Kojima M."/>
            <person name="Kondo S."/>
            <person name="Konno H."/>
            <person name="Nakano K."/>
            <person name="Ninomiya N."/>
            <person name="Nishio T."/>
            <person name="Okada M."/>
            <person name="Plessy C."/>
            <person name="Shibata K."/>
            <person name="Shiraki T."/>
            <person name="Suzuki S."/>
            <person name="Tagami M."/>
            <person name="Waki K."/>
            <person name="Watahiki A."/>
            <person name="Okamura-Oho Y."/>
            <person name="Suzuki H."/>
            <person name="Kawai J."/>
            <person name="Hayashizaki Y."/>
        </authorList>
    </citation>
    <scope>NUCLEOTIDE SEQUENCE [LARGE SCALE MRNA]</scope>
    <source>
        <strain>C57BL/6J</strain>
        <tissue>Embryo</tissue>
    </source>
</reference>
<reference key="4">
    <citation type="journal article" date="2005" name="Mol. Biol. Cell">
        <title>EHD proteins associate with syndapin I and II and such interactions play a crucial role in endosomal recycling.</title>
        <authorList>
            <person name="Braun A."/>
            <person name="Pinyol R."/>
            <person name="Dahlhaus R."/>
            <person name="Koch D."/>
            <person name="Fonarev P."/>
            <person name="Grant B.D."/>
            <person name="Kessels M.M."/>
            <person name="Qualmann B."/>
        </authorList>
    </citation>
    <scope>FUNCTION</scope>
    <scope>DOMAIN</scope>
    <scope>MUTAGENESIS OF GLY-65 AND TRP-485</scope>
    <scope>INTERACTION WITH PACSIN1 AND PACSIN2</scope>
</reference>
<reference key="5">
    <citation type="journal article" date="2005" name="Nat. Biotechnol.">
        <title>Immunoaffinity profiling of tyrosine phosphorylation in cancer cells.</title>
        <authorList>
            <person name="Rush J."/>
            <person name="Moritz A."/>
            <person name="Lee K.A."/>
            <person name="Guo A."/>
            <person name="Goss V.L."/>
            <person name="Spek E.J."/>
            <person name="Zhang H."/>
            <person name="Zha X.-M."/>
            <person name="Polakiewicz R.D."/>
            <person name="Comb M.J."/>
        </authorList>
    </citation>
    <scope>IDENTIFICATION BY MASS SPECTROMETRY [LARGE SCALE ANALYSIS]</scope>
</reference>
<reference key="6">
    <citation type="journal article" date="2010" name="Cell">
        <title>A tissue-specific atlas of mouse protein phosphorylation and expression.</title>
        <authorList>
            <person name="Huttlin E.L."/>
            <person name="Jedrychowski M.P."/>
            <person name="Elias J.E."/>
            <person name="Goswami T."/>
            <person name="Rad R."/>
            <person name="Beausoleil S.A."/>
            <person name="Villen J."/>
            <person name="Haas W."/>
            <person name="Sowa M.E."/>
            <person name="Gygi S.P."/>
        </authorList>
    </citation>
    <scope>PHOSPHORYLATION [LARGE SCALE ANALYSIS] AT SER-355 AND SER-456</scope>
    <scope>IDENTIFICATION BY MASS SPECTROMETRY [LARGE SCALE ANALYSIS]</scope>
    <source>
        <tissue>Brain</tissue>
        <tissue>Brown adipose tissue</tissue>
        <tissue>Heart</tissue>
        <tissue>Kidney</tissue>
        <tissue>Liver</tissue>
        <tissue>Lung</tissue>
        <tissue>Pancreas</tissue>
        <tissue>Spleen</tissue>
        <tissue>Testis</tissue>
    </source>
</reference>
<reference key="7">
    <citation type="journal article" date="2010" name="Mol. Cell">
        <title>The Connecdenn DENN domain: a GEF for Rab35 mediating cargo-specific exit from early endosomes.</title>
        <authorList>
            <person name="Allaire P.D."/>
            <person name="Marat A.L."/>
            <person name="Dall'Armi C."/>
            <person name="Di Paolo G."/>
            <person name="McPherson P.S."/>
            <person name="Ritter B."/>
        </authorList>
    </citation>
    <scope>FUNCTION</scope>
</reference>
<reference key="8">
    <citation type="journal article" date="2011" name="J. Biol. Chem.">
        <title>Endocytic recycling proteins EHD1 and EHD2 interact with fer-1-like-5 (Fer1L5) and mediate myoblast fusion.</title>
        <authorList>
            <person name="Posey A.D. Jr."/>
            <person name="Pytel P."/>
            <person name="Gardikiotes K."/>
            <person name="Demonbreun A.R."/>
            <person name="Rainey M."/>
            <person name="George M."/>
            <person name="Band H."/>
            <person name="McNally E.M."/>
        </authorList>
    </citation>
    <scope>FUNCTION</scope>
    <scope>INTERACTION WITH FER1L5 AND MYOF</scope>
    <scope>SUBCELLULAR LOCATION</scope>
</reference>
<reference key="9">
    <citation type="journal article" date="2013" name="Cell Rep.">
        <title>A function for EHD family proteins in unidirectional retrograde dendritic transport of BACE1 and Alzheimer's disease Abeta production.</title>
        <authorList>
            <person name="Buggia-Prevot V."/>
            <person name="Fernandez C.G."/>
            <person name="Udayar V."/>
            <person name="Vetrivel K.S."/>
            <person name="Elie A."/>
            <person name="Roseman J."/>
            <person name="Sasse V.A."/>
            <person name="Lefkow M."/>
            <person name="Meckler X."/>
            <person name="Bhattacharyya S."/>
            <person name="George M."/>
            <person name="Kar S."/>
            <person name="Bindokas V.P."/>
            <person name="Parent A.T."/>
            <person name="Rajendran L."/>
            <person name="Band H."/>
            <person name="Vassar R."/>
            <person name="Thinakaran G."/>
        </authorList>
    </citation>
    <scope>FUNCTION</scope>
    <scope>SUBCELLULAR LOCATION</scope>
</reference>
<reference key="10">
    <citation type="journal article" date="2013" name="J. Cell Sci.">
        <title>Rab35 establishes the EHD1-association site by coordinating two distinct effectors during neurite outgrowth.</title>
        <authorList>
            <person name="Kobayashi H."/>
            <person name="Fukuda M."/>
        </authorList>
    </citation>
    <scope>INTERACTION WITH MICALL1 AND RAB35</scope>
</reference>
<dbReference type="EMBL" id="AF099186">
    <property type="protein sequence ID" value="AAD45423.1"/>
    <property type="molecule type" value="mRNA"/>
</dbReference>
<dbReference type="EMBL" id="AF173156">
    <property type="protein sequence ID" value="AAF24223.1"/>
    <property type="molecule type" value="mRNA"/>
</dbReference>
<dbReference type="EMBL" id="AK012896">
    <property type="protein sequence ID" value="BAB28540.1"/>
    <property type="molecule type" value="mRNA"/>
</dbReference>
<dbReference type="CCDS" id="CCDS29501.1"/>
<dbReference type="RefSeq" id="NP_034249.1">
    <property type="nucleotide sequence ID" value="NM_010119.5"/>
</dbReference>
<dbReference type="BMRB" id="Q9WVK4"/>
<dbReference type="SMR" id="Q9WVK4"/>
<dbReference type="BioGRID" id="199408">
    <property type="interactions" value="18"/>
</dbReference>
<dbReference type="CORUM" id="Q9WVK4"/>
<dbReference type="DIP" id="DIP-59491N"/>
<dbReference type="FunCoup" id="Q9WVK4">
    <property type="interactions" value="2173"/>
</dbReference>
<dbReference type="IntAct" id="Q9WVK4">
    <property type="interactions" value="5"/>
</dbReference>
<dbReference type="STRING" id="10090.ENSMUSP00000025684"/>
<dbReference type="GlyGen" id="Q9WVK4">
    <property type="glycosylation" value="1 site, 1 O-linked glycan (1 site)"/>
</dbReference>
<dbReference type="iPTMnet" id="Q9WVK4"/>
<dbReference type="PhosphoSitePlus" id="Q9WVK4"/>
<dbReference type="SwissPalm" id="Q9WVK4"/>
<dbReference type="jPOST" id="Q9WVK4"/>
<dbReference type="PaxDb" id="10090-ENSMUSP00000025684"/>
<dbReference type="ProteomicsDB" id="275908"/>
<dbReference type="Pumba" id="Q9WVK4"/>
<dbReference type="Antibodypedia" id="44098">
    <property type="antibodies" value="189 antibodies from 30 providers"/>
</dbReference>
<dbReference type="DNASU" id="13660"/>
<dbReference type="Ensembl" id="ENSMUST00000025684.4">
    <property type="protein sequence ID" value="ENSMUSP00000025684.4"/>
    <property type="gene ID" value="ENSMUSG00000024772.10"/>
</dbReference>
<dbReference type="GeneID" id="13660"/>
<dbReference type="KEGG" id="mmu:13660"/>
<dbReference type="UCSC" id="uc008ghz.1">
    <property type="organism name" value="mouse"/>
</dbReference>
<dbReference type="AGR" id="MGI:1341878"/>
<dbReference type="CTD" id="10938"/>
<dbReference type="MGI" id="MGI:1341878">
    <property type="gene designation" value="Ehd1"/>
</dbReference>
<dbReference type="VEuPathDB" id="HostDB:ENSMUSG00000024772"/>
<dbReference type="eggNOG" id="KOG1954">
    <property type="taxonomic scope" value="Eukaryota"/>
</dbReference>
<dbReference type="GeneTree" id="ENSGT00940000158249"/>
<dbReference type="HOGENOM" id="CLU_017595_1_1_1"/>
<dbReference type="InParanoid" id="Q9WVK4"/>
<dbReference type="OMA" id="MRVYIGY"/>
<dbReference type="OrthoDB" id="1716625at2759"/>
<dbReference type="PhylomeDB" id="Q9WVK4"/>
<dbReference type="TreeFam" id="TF314429"/>
<dbReference type="Reactome" id="R-MMU-983231">
    <property type="pathway name" value="Factors involved in megakaryocyte development and platelet production"/>
</dbReference>
<dbReference type="BioGRID-ORCS" id="13660">
    <property type="hits" value="1 hit in 80 CRISPR screens"/>
</dbReference>
<dbReference type="ChiTaRS" id="Ehd1">
    <property type="organism name" value="mouse"/>
</dbReference>
<dbReference type="PRO" id="PR:Q9WVK4"/>
<dbReference type="Proteomes" id="UP000000589">
    <property type="component" value="Chromosome 19"/>
</dbReference>
<dbReference type="RNAct" id="Q9WVK4">
    <property type="molecule type" value="protein"/>
</dbReference>
<dbReference type="Bgee" id="ENSMUSG00000024772">
    <property type="expression patterns" value="Expressed in granulocyte and 77 other cell types or tissues"/>
</dbReference>
<dbReference type="ExpressionAtlas" id="Q9WVK4">
    <property type="expression patterns" value="baseline and differential"/>
</dbReference>
<dbReference type="GO" id="GO:0020018">
    <property type="term" value="C:ciliary pocket membrane"/>
    <property type="evidence" value="ECO:0000250"/>
    <property type="project" value="UniProtKB"/>
</dbReference>
<dbReference type="GO" id="GO:0005929">
    <property type="term" value="C:cilium"/>
    <property type="evidence" value="ECO:0000250"/>
    <property type="project" value="UniProtKB"/>
</dbReference>
<dbReference type="GO" id="GO:0005769">
    <property type="term" value="C:early endosome"/>
    <property type="evidence" value="ECO:0000314"/>
    <property type="project" value="MGI"/>
</dbReference>
<dbReference type="GO" id="GO:0031901">
    <property type="term" value="C:early endosome membrane"/>
    <property type="evidence" value="ECO:0000250"/>
    <property type="project" value="UniProtKB"/>
</dbReference>
<dbReference type="GO" id="GO:0030139">
    <property type="term" value="C:endocytic vesicle"/>
    <property type="evidence" value="ECO:0000314"/>
    <property type="project" value="MGI"/>
</dbReference>
<dbReference type="GO" id="GO:0005768">
    <property type="term" value="C:endosome"/>
    <property type="evidence" value="ECO:0000314"/>
    <property type="project" value="MGI"/>
</dbReference>
<dbReference type="GO" id="GO:0010008">
    <property type="term" value="C:endosome membrane"/>
    <property type="evidence" value="ECO:0000250"/>
    <property type="project" value="UniProtKB"/>
</dbReference>
<dbReference type="GO" id="GO:0098978">
    <property type="term" value="C:glutamatergic synapse"/>
    <property type="evidence" value="ECO:0007669"/>
    <property type="project" value="Ensembl"/>
</dbReference>
<dbReference type="GO" id="GO:0005811">
    <property type="term" value="C:lipid droplet"/>
    <property type="evidence" value="ECO:0000314"/>
    <property type="project" value="BHF-UCL"/>
</dbReference>
<dbReference type="GO" id="GO:0043209">
    <property type="term" value="C:myelin sheath"/>
    <property type="evidence" value="ECO:0007005"/>
    <property type="project" value="UniProtKB"/>
</dbReference>
<dbReference type="GO" id="GO:0048471">
    <property type="term" value="C:perinuclear region of cytoplasm"/>
    <property type="evidence" value="ECO:0000314"/>
    <property type="project" value="MGI"/>
</dbReference>
<dbReference type="GO" id="GO:0005886">
    <property type="term" value="C:plasma membrane"/>
    <property type="evidence" value="ECO:0000314"/>
    <property type="project" value="UniProtKB"/>
</dbReference>
<dbReference type="GO" id="GO:0031095">
    <property type="term" value="C:platelet dense tubular network membrane"/>
    <property type="evidence" value="ECO:0000314"/>
    <property type="project" value="BHF-UCL"/>
</dbReference>
<dbReference type="GO" id="GO:0048786">
    <property type="term" value="C:presynaptic active zone"/>
    <property type="evidence" value="ECO:0007669"/>
    <property type="project" value="Ensembl"/>
</dbReference>
<dbReference type="GO" id="GO:0055038">
    <property type="term" value="C:recycling endosome membrane"/>
    <property type="evidence" value="ECO:0000250"/>
    <property type="project" value="UniProtKB"/>
</dbReference>
<dbReference type="GO" id="GO:0005524">
    <property type="term" value="F:ATP binding"/>
    <property type="evidence" value="ECO:0007669"/>
    <property type="project" value="UniProtKB-KW"/>
</dbReference>
<dbReference type="GO" id="GO:0005509">
    <property type="term" value="F:calcium ion binding"/>
    <property type="evidence" value="ECO:0007669"/>
    <property type="project" value="InterPro"/>
</dbReference>
<dbReference type="GO" id="GO:0005525">
    <property type="term" value="F:GTP binding"/>
    <property type="evidence" value="ECO:0007669"/>
    <property type="project" value="InterPro"/>
</dbReference>
<dbReference type="GO" id="GO:0042802">
    <property type="term" value="F:identical protein binding"/>
    <property type="evidence" value="ECO:0007669"/>
    <property type="project" value="Ensembl"/>
</dbReference>
<dbReference type="GO" id="GO:0031267">
    <property type="term" value="F:small GTPase binding"/>
    <property type="evidence" value="ECO:0007669"/>
    <property type="project" value="Ensembl"/>
</dbReference>
<dbReference type="GO" id="GO:1990090">
    <property type="term" value="P:cellular response to nerve growth factor stimulus"/>
    <property type="evidence" value="ECO:0000250"/>
    <property type="project" value="UniProtKB"/>
</dbReference>
<dbReference type="GO" id="GO:0042632">
    <property type="term" value="P:cholesterol homeostasis"/>
    <property type="evidence" value="ECO:0000315"/>
    <property type="project" value="BHF-UCL"/>
</dbReference>
<dbReference type="GO" id="GO:0060271">
    <property type="term" value="P:cilium assembly"/>
    <property type="evidence" value="ECO:0000315"/>
    <property type="project" value="UniProtKB"/>
</dbReference>
<dbReference type="GO" id="GO:0032456">
    <property type="term" value="P:endocytic recycling"/>
    <property type="evidence" value="ECO:0000250"/>
    <property type="project" value="UniProtKB"/>
</dbReference>
<dbReference type="GO" id="GO:0006897">
    <property type="term" value="P:endocytosis"/>
    <property type="evidence" value="ECO:0000314"/>
    <property type="project" value="MGI"/>
</dbReference>
<dbReference type="GO" id="GO:0016197">
    <property type="term" value="P:endosomal transport"/>
    <property type="evidence" value="ECO:0000314"/>
    <property type="project" value="MGI"/>
</dbReference>
<dbReference type="GO" id="GO:0006886">
    <property type="term" value="P:intracellular protein transport"/>
    <property type="evidence" value="ECO:0000250"/>
    <property type="project" value="UniProtKB"/>
</dbReference>
<dbReference type="GO" id="GO:0034383">
    <property type="term" value="P:low-density lipoprotein particle clearance"/>
    <property type="evidence" value="ECO:0000315"/>
    <property type="project" value="BHF-UCL"/>
</dbReference>
<dbReference type="GO" id="GO:0031175">
    <property type="term" value="P:neuron projection development"/>
    <property type="evidence" value="ECO:0000250"/>
    <property type="project" value="UniProtKB"/>
</dbReference>
<dbReference type="GO" id="GO:0010886">
    <property type="term" value="P:positive regulation of cholesterol storage"/>
    <property type="evidence" value="ECO:0000315"/>
    <property type="project" value="BHF-UCL"/>
</dbReference>
<dbReference type="GO" id="GO:2001137">
    <property type="term" value="P:positive regulation of endocytic recycling"/>
    <property type="evidence" value="ECO:0000315"/>
    <property type="project" value="UniProtKB"/>
</dbReference>
<dbReference type="GO" id="GO:1901741">
    <property type="term" value="P:positive regulation of myoblast fusion"/>
    <property type="evidence" value="ECO:0000315"/>
    <property type="project" value="UniProtKB"/>
</dbReference>
<dbReference type="GO" id="GO:0010976">
    <property type="term" value="P:positive regulation of neuron projection development"/>
    <property type="evidence" value="ECO:0007669"/>
    <property type="project" value="Ensembl"/>
</dbReference>
<dbReference type="GO" id="GO:0051260">
    <property type="term" value="P:protein homooligomerization"/>
    <property type="evidence" value="ECO:0007669"/>
    <property type="project" value="Ensembl"/>
</dbReference>
<dbReference type="GO" id="GO:0061512">
    <property type="term" value="P:protein localization to cilium"/>
    <property type="evidence" value="ECO:0000250"/>
    <property type="project" value="UniProtKB"/>
</dbReference>
<dbReference type="CDD" id="cd00052">
    <property type="entry name" value="EH"/>
    <property type="match status" value="1"/>
</dbReference>
<dbReference type="CDD" id="cd09913">
    <property type="entry name" value="EHD"/>
    <property type="match status" value="1"/>
</dbReference>
<dbReference type="FunFam" id="3.40.50.300:FF:000147">
    <property type="entry name" value="EH domain-containing protein 1"/>
    <property type="match status" value="1"/>
</dbReference>
<dbReference type="FunFam" id="1.10.238.10:FF:000038">
    <property type="entry name" value="EH domain-containing protein 3"/>
    <property type="match status" value="1"/>
</dbReference>
<dbReference type="Gene3D" id="1.10.268.20">
    <property type="match status" value="1"/>
</dbReference>
<dbReference type="Gene3D" id="1.10.238.10">
    <property type="entry name" value="EF-hand"/>
    <property type="match status" value="1"/>
</dbReference>
<dbReference type="Gene3D" id="3.40.50.300">
    <property type="entry name" value="P-loop containing nucleotide triphosphate hydrolases"/>
    <property type="match status" value="1"/>
</dbReference>
<dbReference type="InterPro" id="IPR040990">
    <property type="entry name" value="DUF5600"/>
</dbReference>
<dbReference type="InterPro" id="IPR045063">
    <property type="entry name" value="Dynamin_N"/>
</dbReference>
<dbReference type="InterPro" id="IPR011992">
    <property type="entry name" value="EF-hand-dom_pair"/>
</dbReference>
<dbReference type="InterPro" id="IPR018247">
    <property type="entry name" value="EF_Hand_1_Ca_BS"/>
</dbReference>
<dbReference type="InterPro" id="IPR002048">
    <property type="entry name" value="EF_hand_dom"/>
</dbReference>
<dbReference type="InterPro" id="IPR000261">
    <property type="entry name" value="EH_dom"/>
</dbReference>
<dbReference type="InterPro" id="IPR031692">
    <property type="entry name" value="EHD_N"/>
</dbReference>
<dbReference type="InterPro" id="IPR030381">
    <property type="entry name" value="G_DYNAMIN_dom"/>
</dbReference>
<dbReference type="InterPro" id="IPR027417">
    <property type="entry name" value="P-loop_NTPase"/>
</dbReference>
<dbReference type="PANTHER" id="PTHR11216:SF170">
    <property type="entry name" value="DYNAMIN ASSOCIATED PROTEIN 160, ISOFORM D"/>
    <property type="match status" value="1"/>
</dbReference>
<dbReference type="PANTHER" id="PTHR11216">
    <property type="entry name" value="EH DOMAIN"/>
    <property type="match status" value="1"/>
</dbReference>
<dbReference type="Pfam" id="PF18150">
    <property type="entry name" value="DUF5600"/>
    <property type="match status" value="1"/>
</dbReference>
<dbReference type="Pfam" id="PF00350">
    <property type="entry name" value="Dynamin_N"/>
    <property type="match status" value="1"/>
</dbReference>
<dbReference type="Pfam" id="PF12763">
    <property type="entry name" value="EH"/>
    <property type="match status" value="1"/>
</dbReference>
<dbReference type="Pfam" id="PF16880">
    <property type="entry name" value="EHD_N"/>
    <property type="match status" value="1"/>
</dbReference>
<dbReference type="SMART" id="SM00027">
    <property type="entry name" value="EH"/>
    <property type="match status" value="1"/>
</dbReference>
<dbReference type="SUPFAM" id="SSF47473">
    <property type="entry name" value="EF-hand"/>
    <property type="match status" value="1"/>
</dbReference>
<dbReference type="SUPFAM" id="SSF52540">
    <property type="entry name" value="P-loop containing nucleoside triphosphate hydrolases"/>
    <property type="match status" value="1"/>
</dbReference>
<dbReference type="PROSITE" id="PS00018">
    <property type="entry name" value="EF_HAND_1"/>
    <property type="match status" value="1"/>
</dbReference>
<dbReference type="PROSITE" id="PS50222">
    <property type="entry name" value="EF_HAND_2"/>
    <property type="match status" value="1"/>
</dbReference>
<dbReference type="PROSITE" id="PS50031">
    <property type="entry name" value="EH"/>
    <property type="match status" value="1"/>
</dbReference>
<dbReference type="PROSITE" id="PS51718">
    <property type="entry name" value="G_DYNAMIN_2"/>
    <property type="match status" value="1"/>
</dbReference>
<gene>
    <name evidence="16" type="primary">Ehd1</name>
    <name evidence="15" type="synonym">Past1</name>
</gene>
<proteinExistence type="evidence at protein level"/>
<protein>
    <recommendedName>
        <fullName evidence="14">EH domain-containing protein 1</fullName>
    </recommendedName>
    <alternativeName>
        <fullName evidence="14">PAST homolog 1</fullName>
        <shortName evidence="15">mPAST1</shortName>
    </alternativeName>
</protein>
<name>EHD1_MOUSE</name>
<evidence type="ECO:0000250" key="1">
    <source>
        <dbReference type="UniProtKB" id="Q641Z6"/>
    </source>
</evidence>
<evidence type="ECO:0000250" key="2">
    <source>
        <dbReference type="UniProtKB" id="Q8BH64"/>
    </source>
</evidence>
<evidence type="ECO:0000250" key="3">
    <source>
        <dbReference type="UniProtKB" id="Q9H4M9"/>
    </source>
</evidence>
<evidence type="ECO:0000255" key="4"/>
<evidence type="ECO:0000255" key="5">
    <source>
        <dbReference type="PROSITE-ProRule" id="PRU00077"/>
    </source>
</evidence>
<evidence type="ECO:0000255" key="6">
    <source>
        <dbReference type="PROSITE-ProRule" id="PRU00448"/>
    </source>
</evidence>
<evidence type="ECO:0000255" key="7">
    <source>
        <dbReference type="PROSITE-ProRule" id="PRU01055"/>
    </source>
</evidence>
<evidence type="ECO:0000269" key="8">
    <source>
    </source>
</evidence>
<evidence type="ECO:0000269" key="9">
    <source>
    </source>
</evidence>
<evidence type="ECO:0000269" key="10">
    <source>
    </source>
</evidence>
<evidence type="ECO:0000269" key="11">
    <source>
    </source>
</evidence>
<evidence type="ECO:0000269" key="12">
    <source>
    </source>
</evidence>
<evidence type="ECO:0000269" key="13">
    <source>
    </source>
</evidence>
<evidence type="ECO:0000305" key="14"/>
<evidence type="ECO:0000312" key="15">
    <source>
        <dbReference type="EMBL" id="AAF24223.1"/>
    </source>
</evidence>
<evidence type="ECO:0000312" key="16">
    <source>
        <dbReference type="MGI" id="MGI:1341878"/>
    </source>
</evidence>
<evidence type="ECO:0007744" key="17">
    <source>
    </source>
</evidence>